<comment type="function">
    <text evidence="1">Cell division inhibitor that blocks the formation of polar Z ring septums. Rapidly oscillates between the poles of the cell to destabilize FtsZ filaments that have formed before they mature into polar Z rings. Prevents FtsZ polymerization.</text>
</comment>
<comment type="subunit">
    <text evidence="1">Interacts with MinD and FtsZ.</text>
</comment>
<comment type="similarity">
    <text evidence="1">Belongs to the MinC family.</text>
</comment>
<keyword id="KW-0131">Cell cycle</keyword>
<keyword id="KW-0132">Cell division</keyword>
<keyword id="KW-1185">Reference proteome</keyword>
<keyword id="KW-0717">Septation</keyword>
<gene>
    <name evidence="1" type="primary">minC</name>
    <name type="ordered locus">Bfl439</name>
</gene>
<proteinExistence type="inferred from homology"/>
<feature type="chain" id="PRO_0000189027" description="Probable septum site-determining protein MinC">
    <location>
        <begin position="1"/>
        <end position="238"/>
    </location>
</feature>
<accession>Q7VQZ1</accession>
<evidence type="ECO:0000255" key="1">
    <source>
        <dbReference type="HAMAP-Rule" id="MF_00267"/>
    </source>
</evidence>
<name>MINC_BLOFL</name>
<reference key="1">
    <citation type="journal article" date="2003" name="Proc. Natl. Acad. Sci. U.S.A.">
        <title>The genome sequence of Blochmannia floridanus: comparative analysis of reduced genomes.</title>
        <authorList>
            <person name="Gil R."/>
            <person name="Silva F.J."/>
            <person name="Zientz E."/>
            <person name="Delmotte F."/>
            <person name="Gonzalez-Candelas F."/>
            <person name="Latorre A."/>
            <person name="Rausell C."/>
            <person name="Kamerbeek J."/>
            <person name="Gadau J."/>
            <person name="Hoelldobler B."/>
            <person name="van Ham R.C.H.J."/>
            <person name="Gross R."/>
            <person name="Moya A."/>
        </authorList>
    </citation>
    <scope>NUCLEOTIDE SEQUENCE [LARGE SCALE GENOMIC DNA]</scope>
</reference>
<protein>
    <recommendedName>
        <fullName evidence="1">Probable septum site-determining protein MinC</fullName>
    </recommendedName>
</protein>
<dbReference type="EMBL" id="BX248583">
    <property type="protein sequence ID" value="CAD83501.1"/>
    <property type="molecule type" value="Genomic_DNA"/>
</dbReference>
<dbReference type="SMR" id="Q7VQZ1"/>
<dbReference type="STRING" id="203907.Bfl439"/>
<dbReference type="KEGG" id="bfl:Bfl439"/>
<dbReference type="eggNOG" id="COG0850">
    <property type="taxonomic scope" value="Bacteria"/>
</dbReference>
<dbReference type="HOGENOM" id="CLU_067812_0_1_6"/>
<dbReference type="OrthoDB" id="9794530at2"/>
<dbReference type="Proteomes" id="UP000002192">
    <property type="component" value="Chromosome"/>
</dbReference>
<dbReference type="GO" id="GO:0000902">
    <property type="term" value="P:cell morphogenesis"/>
    <property type="evidence" value="ECO:0007669"/>
    <property type="project" value="InterPro"/>
</dbReference>
<dbReference type="GO" id="GO:0000917">
    <property type="term" value="P:division septum assembly"/>
    <property type="evidence" value="ECO:0007669"/>
    <property type="project" value="UniProtKB-KW"/>
</dbReference>
<dbReference type="GO" id="GO:0051302">
    <property type="term" value="P:regulation of cell division"/>
    <property type="evidence" value="ECO:0007669"/>
    <property type="project" value="InterPro"/>
</dbReference>
<dbReference type="GO" id="GO:1901891">
    <property type="term" value="P:regulation of cell septum assembly"/>
    <property type="evidence" value="ECO:0007669"/>
    <property type="project" value="InterPro"/>
</dbReference>
<dbReference type="Gene3D" id="2.160.20.70">
    <property type="match status" value="1"/>
</dbReference>
<dbReference type="Gene3D" id="3.30.70.260">
    <property type="match status" value="1"/>
</dbReference>
<dbReference type="HAMAP" id="MF_00267">
    <property type="entry name" value="MinC"/>
    <property type="match status" value="1"/>
</dbReference>
<dbReference type="InterPro" id="IPR016098">
    <property type="entry name" value="CAP/MinC_C"/>
</dbReference>
<dbReference type="InterPro" id="IPR013033">
    <property type="entry name" value="MinC"/>
</dbReference>
<dbReference type="InterPro" id="IPR036145">
    <property type="entry name" value="MinC_C_sf"/>
</dbReference>
<dbReference type="InterPro" id="IPR007874">
    <property type="entry name" value="MinC_N"/>
</dbReference>
<dbReference type="InterPro" id="IPR005526">
    <property type="entry name" value="Septum_form_inhib_MinC_C"/>
</dbReference>
<dbReference type="NCBIfam" id="TIGR01222">
    <property type="entry name" value="minC"/>
    <property type="match status" value="1"/>
</dbReference>
<dbReference type="PANTHER" id="PTHR34108">
    <property type="entry name" value="SEPTUM SITE-DETERMINING PROTEIN MINC"/>
    <property type="match status" value="1"/>
</dbReference>
<dbReference type="PANTHER" id="PTHR34108:SF1">
    <property type="entry name" value="SEPTUM SITE-DETERMINING PROTEIN MINC"/>
    <property type="match status" value="1"/>
</dbReference>
<dbReference type="Pfam" id="PF03775">
    <property type="entry name" value="MinC_C"/>
    <property type="match status" value="1"/>
</dbReference>
<dbReference type="Pfam" id="PF05209">
    <property type="entry name" value="MinC_N"/>
    <property type="match status" value="1"/>
</dbReference>
<dbReference type="SUPFAM" id="SSF63848">
    <property type="entry name" value="Cell-division inhibitor MinC, C-terminal domain"/>
    <property type="match status" value="1"/>
</dbReference>
<sequence length="238" mass="26612">MLESVSVDLQGNNFTLLVIQTHTTCTSQIQLELTQKIKNSPSFFSNNTPVVINVENINHHDDWFNLYQTISNIGLFIIGVCCCYNKKLKNIITQSGLPILTKGNIIKSHKNTIKTNYTKPTFDDKTNAISKTQTIHTPIRSGQRIYARNRDLIIISNVSSGAEVIADGNIHIYGSVRGRVLAGASGCEQSQIFCTKLSPELISIGGYYWLNDQIPPEFLGKSARFYLQNHTLIIQHIS</sequence>
<organism>
    <name type="scientific">Blochmanniella floridana</name>
    <dbReference type="NCBI Taxonomy" id="203907"/>
    <lineage>
        <taxon>Bacteria</taxon>
        <taxon>Pseudomonadati</taxon>
        <taxon>Pseudomonadota</taxon>
        <taxon>Gammaproteobacteria</taxon>
        <taxon>Enterobacterales</taxon>
        <taxon>Enterobacteriaceae</taxon>
        <taxon>ant endosymbionts</taxon>
        <taxon>Candidatus Blochmanniella</taxon>
    </lineage>
</organism>